<keyword id="KW-0067">ATP-binding</keyword>
<keyword id="KW-0963">Cytoplasm</keyword>
<keyword id="KW-0436">Ligase</keyword>
<keyword id="KW-0547">Nucleotide-binding</keyword>
<keyword id="KW-0566">Pantothenate biosynthesis</keyword>
<keyword id="KW-1185">Reference proteome</keyword>
<accession>Q7MWV8</accession>
<evidence type="ECO:0000255" key="1">
    <source>
        <dbReference type="HAMAP-Rule" id="MF_00158"/>
    </source>
</evidence>
<protein>
    <recommendedName>
        <fullName evidence="1">Pantothenate synthetase</fullName>
        <shortName evidence="1">PS</shortName>
        <ecNumber evidence="1">6.3.2.1</ecNumber>
    </recommendedName>
    <alternativeName>
        <fullName evidence="1">Pantoate--beta-alanine ligase</fullName>
    </alternativeName>
    <alternativeName>
        <fullName evidence="1">Pantoate-activating enzyme</fullName>
    </alternativeName>
</protein>
<comment type="function">
    <text evidence="1">Catalyzes the condensation of pantoate with beta-alanine in an ATP-dependent reaction via a pantoyl-adenylate intermediate.</text>
</comment>
<comment type="catalytic activity">
    <reaction evidence="1">
        <text>(R)-pantoate + beta-alanine + ATP = (R)-pantothenate + AMP + diphosphate + H(+)</text>
        <dbReference type="Rhea" id="RHEA:10912"/>
        <dbReference type="ChEBI" id="CHEBI:15378"/>
        <dbReference type="ChEBI" id="CHEBI:15980"/>
        <dbReference type="ChEBI" id="CHEBI:29032"/>
        <dbReference type="ChEBI" id="CHEBI:30616"/>
        <dbReference type="ChEBI" id="CHEBI:33019"/>
        <dbReference type="ChEBI" id="CHEBI:57966"/>
        <dbReference type="ChEBI" id="CHEBI:456215"/>
        <dbReference type="EC" id="6.3.2.1"/>
    </reaction>
</comment>
<comment type="pathway">
    <text evidence="1">Cofactor biosynthesis; (R)-pantothenate biosynthesis; (R)-pantothenate from (R)-pantoate and beta-alanine: step 1/1.</text>
</comment>
<comment type="subunit">
    <text evidence="1">Homodimer.</text>
</comment>
<comment type="subcellular location">
    <subcellularLocation>
        <location evidence="1">Cytoplasm</location>
    </subcellularLocation>
</comment>
<comment type="miscellaneous">
    <text evidence="1">The reaction proceeds by a bi uni uni bi ping pong mechanism.</text>
</comment>
<comment type="similarity">
    <text evidence="1">Belongs to the pantothenate synthetase family.</text>
</comment>
<dbReference type="EC" id="6.3.2.1" evidence="1"/>
<dbReference type="EMBL" id="AE015924">
    <property type="protein sequence ID" value="AAQ65672.1"/>
    <property type="molecule type" value="Genomic_DNA"/>
</dbReference>
<dbReference type="RefSeq" id="WP_005873851.1">
    <property type="nucleotide sequence ID" value="NC_002950.2"/>
</dbReference>
<dbReference type="SMR" id="Q7MWV8"/>
<dbReference type="STRING" id="242619.PG_0477"/>
<dbReference type="EnsemblBacteria" id="AAQ65672">
    <property type="protein sequence ID" value="AAQ65672"/>
    <property type="gene ID" value="PG_0477"/>
</dbReference>
<dbReference type="KEGG" id="pgi:PG_0477"/>
<dbReference type="PATRIC" id="fig|242619.8.peg.436"/>
<dbReference type="eggNOG" id="COG0414">
    <property type="taxonomic scope" value="Bacteria"/>
</dbReference>
<dbReference type="HOGENOM" id="CLU_047148_0_0_10"/>
<dbReference type="BioCyc" id="PGIN242619:G1G02-441-MONOMER"/>
<dbReference type="UniPathway" id="UPA00028">
    <property type="reaction ID" value="UER00005"/>
</dbReference>
<dbReference type="Proteomes" id="UP000000588">
    <property type="component" value="Chromosome"/>
</dbReference>
<dbReference type="GO" id="GO:0005829">
    <property type="term" value="C:cytosol"/>
    <property type="evidence" value="ECO:0007669"/>
    <property type="project" value="TreeGrafter"/>
</dbReference>
<dbReference type="GO" id="GO:0005524">
    <property type="term" value="F:ATP binding"/>
    <property type="evidence" value="ECO:0007669"/>
    <property type="project" value="UniProtKB-KW"/>
</dbReference>
<dbReference type="GO" id="GO:0004592">
    <property type="term" value="F:pantoate-beta-alanine ligase activity"/>
    <property type="evidence" value="ECO:0007669"/>
    <property type="project" value="UniProtKB-UniRule"/>
</dbReference>
<dbReference type="GO" id="GO:0015940">
    <property type="term" value="P:pantothenate biosynthetic process"/>
    <property type="evidence" value="ECO:0007669"/>
    <property type="project" value="UniProtKB-UniRule"/>
</dbReference>
<dbReference type="CDD" id="cd00560">
    <property type="entry name" value="PanC"/>
    <property type="match status" value="1"/>
</dbReference>
<dbReference type="FunFam" id="3.40.50.620:FF:000013">
    <property type="entry name" value="Pantothenate synthetase"/>
    <property type="match status" value="1"/>
</dbReference>
<dbReference type="Gene3D" id="3.40.50.620">
    <property type="entry name" value="HUPs"/>
    <property type="match status" value="1"/>
</dbReference>
<dbReference type="Gene3D" id="3.30.1300.10">
    <property type="entry name" value="Pantoate-beta-alanine ligase, C-terminal domain"/>
    <property type="match status" value="1"/>
</dbReference>
<dbReference type="HAMAP" id="MF_00158">
    <property type="entry name" value="PanC"/>
    <property type="match status" value="1"/>
</dbReference>
<dbReference type="InterPro" id="IPR003721">
    <property type="entry name" value="Pantoate_ligase"/>
</dbReference>
<dbReference type="InterPro" id="IPR042176">
    <property type="entry name" value="Pantoate_ligase_C"/>
</dbReference>
<dbReference type="InterPro" id="IPR014729">
    <property type="entry name" value="Rossmann-like_a/b/a_fold"/>
</dbReference>
<dbReference type="NCBIfam" id="TIGR00018">
    <property type="entry name" value="panC"/>
    <property type="match status" value="1"/>
</dbReference>
<dbReference type="PANTHER" id="PTHR21299">
    <property type="entry name" value="CYTIDYLATE KINASE/PANTOATE-BETA-ALANINE LIGASE"/>
    <property type="match status" value="1"/>
</dbReference>
<dbReference type="PANTHER" id="PTHR21299:SF1">
    <property type="entry name" value="PANTOATE--BETA-ALANINE LIGASE"/>
    <property type="match status" value="1"/>
</dbReference>
<dbReference type="Pfam" id="PF02569">
    <property type="entry name" value="Pantoate_ligase"/>
    <property type="match status" value="1"/>
</dbReference>
<dbReference type="SUPFAM" id="SSF52374">
    <property type="entry name" value="Nucleotidylyl transferase"/>
    <property type="match status" value="1"/>
</dbReference>
<sequence>MEIFNTVASLKNFVAHARAEGKTIGLVPTMGALHRGHISLIHRAVAECDICVASVFVNPTQFNDKRDLECYPRTPEADAAVLAEAACHAVFMPSVEEVYPEPDTRVFDLGSVAEVMEGKHRPGHFNGVAQVVSKLFMMVEPDKAYFGEKDFQQIAVIRSMVNLLGLPVTIVACPIIREEDGLALSSRNVRLGTEERAIAPSIARILGQSRTLRPAHTPEAVTRWVTESLNALPHLQVEYFEIVDGNSLQKIDNWQDTDHAVGCITVYCGEVRLIDNIKYED</sequence>
<name>PANC_PORGI</name>
<feature type="chain" id="PRO_0000305511" description="Pantothenate synthetase">
    <location>
        <begin position="1"/>
        <end position="281"/>
    </location>
</feature>
<feature type="active site" description="Proton donor" evidence="1">
    <location>
        <position position="37"/>
    </location>
</feature>
<feature type="binding site" evidence="1">
    <location>
        <begin position="30"/>
        <end position="37"/>
    </location>
    <ligand>
        <name>ATP</name>
        <dbReference type="ChEBI" id="CHEBI:30616"/>
    </ligand>
</feature>
<feature type="binding site" evidence="1">
    <location>
        <position position="61"/>
    </location>
    <ligand>
        <name>(R)-pantoate</name>
        <dbReference type="ChEBI" id="CHEBI:15980"/>
    </ligand>
</feature>
<feature type="binding site" evidence="1">
    <location>
        <position position="61"/>
    </location>
    <ligand>
        <name>beta-alanine</name>
        <dbReference type="ChEBI" id="CHEBI:57966"/>
    </ligand>
</feature>
<feature type="binding site" evidence="1">
    <location>
        <begin position="147"/>
        <end position="150"/>
    </location>
    <ligand>
        <name>ATP</name>
        <dbReference type="ChEBI" id="CHEBI:30616"/>
    </ligand>
</feature>
<feature type="binding site" evidence="1">
    <location>
        <position position="153"/>
    </location>
    <ligand>
        <name>(R)-pantoate</name>
        <dbReference type="ChEBI" id="CHEBI:15980"/>
    </ligand>
</feature>
<feature type="binding site" evidence="1">
    <location>
        <position position="176"/>
    </location>
    <ligand>
        <name>ATP</name>
        <dbReference type="ChEBI" id="CHEBI:30616"/>
    </ligand>
</feature>
<feature type="binding site" evidence="1">
    <location>
        <begin position="184"/>
        <end position="187"/>
    </location>
    <ligand>
        <name>ATP</name>
        <dbReference type="ChEBI" id="CHEBI:30616"/>
    </ligand>
</feature>
<proteinExistence type="inferred from homology"/>
<organism>
    <name type="scientific">Porphyromonas gingivalis (strain ATCC BAA-308 / W83)</name>
    <dbReference type="NCBI Taxonomy" id="242619"/>
    <lineage>
        <taxon>Bacteria</taxon>
        <taxon>Pseudomonadati</taxon>
        <taxon>Bacteroidota</taxon>
        <taxon>Bacteroidia</taxon>
        <taxon>Bacteroidales</taxon>
        <taxon>Porphyromonadaceae</taxon>
        <taxon>Porphyromonas</taxon>
    </lineage>
</organism>
<gene>
    <name evidence="1" type="primary">panC</name>
    <name type="ordered locus">PG_0477</name>
</gene>
<reference key="1">
    <citation type="journal article" date="2003" name="J. Bacteriol.">
        <title>Complete genome sequence of the oral pathogenic bacterium Porphyromonas gingivalis strain W83.</title>
        <authorList>
            <person name="Nelson K.E."/>
            <person name="Fleischmann R.D."/>
            <person name="DeBoy R.T."/>
            <person name="Paulsen I.T."/>
            <person name="Fouts D.E."/>
            <person name="Eisen J.A."/>
            <person name="Daugherty S.C."/>
            <person name="Dodson R.J."/>
            <person name="Durkin A.S."/>
            <person name="Gwinn M.L."/>
            <person name="Haft D.H."/>
            <person name="Kolonay J.F."/>
            <person name="Nelson W.C."/>
            <person name="Mason T.M."/>
            <person name="Tallon L."/>
            <person name="Gray J."/>
            <person name="Granger D."/>
            <person name="Tettelin H."/>
            <person name="Dong H."/>
            <person name="Galvin J.L."/>
            <person name="Duncan M.J."/>
            <person name="Dewhirst F.E."/>
            <person name="Fraser C.M."/>
        </authorList>
    </citation>
    <scope>NUCLEOTIDE SEQUENCE [LARGE SCALE GENOMIC DNA]</scope>
    <source>
        <strain>ATCC BAA-308 / W83</strain>
    </source>
</reference>